<accession>A6QPR9</accession>
<evidence type="ECO:0000250" key="1">
    <source>
        <dbReference type="UniProtKB" id="Q96QE5"/>
    </source>
</evidence>
<evidence type="ECO:0000255" key="2"/>
<evidence type="ECO:0000305" key="3"/>
<dbReference type="EMBL" id="BC149452">
    <property type="protein sequence ID" value="AAI49453.1"/>
    <property type="status" value="ALT_INIT"/>
    <property type="molecule type" value="mRNA"/>
</dbReference>
<dbReference type="SMR" id="A6QPR9"/>
<dbReference type="FunCoup" id="A6QPR9">
    <property type="interactions" value="1470"/>
</dbReference>
<dbReference type="STRING" id="9913.ENSBTAP00000024467"/>
<dbReference type="PaxDb" id="9913-ENSBTAP00000024467"/>
<dbReference type="eggNOG" id="ENOG502QPVB">
    <property type="taxonomic scope" value="Eukaryota"/>
</dbReference>
<dbReference type="InParanoid" id="A6QPR9"/>
<dbReference type="OrthoDB" id="5949570at2759"/>
<dbReference type="Proteomes" id="UP000009136">
    <property type="component" value="Unplaced"/>
</dbReference>
<dbReference type="GO" id="GO:0005759">
    <property type="term" value="C:mitochondrial matrix"/>
    <property type="evidence" value="ECO:0000250"/>
    <property type="project" value="UniProtKB"/>
</dbReference>
<dbReference type="GO" id="GO:0042645">
    <property type="term" value="C:mitochondrial nucleoid"/>
    <property type="evidence" value="ECO:0000250"/>
    <property type="project" value="UniProtKB"/>
</dbReference>
<dbReference type="GO" id="GO:1990904">
    <property type="term" value="C:ribonucleoprotein complex"/>
    <property type="evidence" value="ECO:0000250"/>
    <property type="project" value="UniProtKB"/>
</dbReference>
<dbReference type="GO" id="GO:0030337">
    <property type="term" value="F:DNA polymerase processivity factor activity"/>
    <property type="evidence" value="ECO:0000318"/>
    <property type="project" value="GO_Central"/>
</dbReference>
<dbReference type="GO" id="GO:0003676">
    <property type="term" value="F:nucleic acid binding"/>
    <property type="evidence" value="ECO:0007669"/>
    <property type="project" value="InterPro"/>
</dbReference>
<dbReference type="GO" id="GO:0003711">
    <property type="term" value="F:transcription elongation factor activity"/>
    <property type="evidence" value="ECO:0000250"/>
    <property type="project" value="UniProtKB"/>
</dbReference>
<dbReference type="GO" id="GO:0006390">
    <property type="term" value="P:mitochondrial transcription"/>
    <property type="evidence" value="ECO:0000318"/>
    <property type="project" value="GO_Central"/>
</dbReference>
<dbReference type="GO" id="GO:1903109">
    <property type="term" value="P:positive regulation of mitochondrial transcription"/>
    <property type="evidence" value="ECO:0000250"/>
    <property type="project" value="UniProtKB"/>
</dbReference>
<dbReference type="GO" id="GO:0006392">
    <property type="term" value="P:transcription elongation by mitochondrial RNA polymerase"/>
    <property type="evidence" value="ECO:0007669"/>
    <property type="project" value="InterPro"/>
</dbReference>
<dbReference type="FunFam" id="1.10.150.280:FF:000004">
    <property type="entry name" value="Transcription elongation factor, mitochondrial"/>
    <property type="match status" value="1"/>
</dbReference>
<dbReference type="FunFam" id="3.30.420.10:FF:000095">
    <property type="entry name" value="Transcription elongation factor, mitochondrial"/>
    <property type="match status" value="1"/>
</dbReference>
<dbReference type="Gene3D" id="1.10.150.280">
    <property type="entry name" value="AF1531-like domain"/>
    <property type="match status" value="1"/>
</dbReference>
<dbReference type="Gene3D" id="3.30.420.10">
    <property type="entry name" value="Ribonuclease H-like superfamily/Ribonuclease H"/>
    <property type="match status" value="1"/>
</dbReference>
<dbReference type="InterPro" id="IPR036397">
    <property type="entry name" value="RNaseH_sf"/>
</dbReference>
<dbReference type="InterPro" id="IPR010994">
    <property type="entry name" value="RuvA_2-like"/>
</dbReference>
<dbReference type="InterPro" id="IPR039150">
    <property type="entry name" value="TEFM"/>
</dbReference>
<dbReference type="PANTHER" id="PTHR21053">
    <property type="entry name" value="TRANSCRIPTION ELONGATION FACTOR, MITOCHONDRIAL"/>
    <property type="match status" value="1"/>
</dbReference>
<dbReference type="PANTHER" id="PTHR21053:SF2">
    <property type="entry name" value="TRANSCRIPTION ELONGATION FACTOR, MITOCHONDRIAL"/>
    <property type="match status" value="1"/>
</dbReference>
<dbReference type="Pfam" id="PF12836">
    <property type="entry name" value="HHH_3"/>
    <property type="match status" value="1"/>
</dbReference>
<dbReference type="SUPFAM" id="SSF47781">
    <property type="entry name" value="RuvA domain 2-like"/>
    <property type="match status" value="1"/>
</dbReference>
<comment type="function">
    <text evidence="1">Transcription elongation factor which increases mitochondrial RNA polymerase processivity. Regulates transcription of the mitochondrial genome, including genes important for the oxidative phosphorylation machinery (By similarity).</text>
</comment>
<comment type="subunit">
    <text evidence="1">Interacts with POLRMT.</text>
</comment>
<comment type="subcellular location">
    <subcellularLocation>
        <location evidence="1">Mitochondrion matrix</location>
    </subcellularLocation>
    <subcellularLocation>
        <location evidence="1">Mitochondrion matrix</location>
        <location evidence="1">Mitochondrion nucleoid</location>
    </subcellularLocation>
</comment>
<comment type="similarity">
    <text evidence="3">Belongs to the TEFM family.</text>
</comment>
<comment type="sequence caution" evidence="3">
    <conflict type="erroneous initiation">
        <sequence resource="EMBL-CDS" id="AAI49453"/>
    </conflict>
    <text>Extended N-terminus.</text>
</comment>
<proteinExistence type="evidence at transcript level"/>
<keyword id="KW-0496">Mitochondrion</keyword>
<keyword id="KW-1135">Mitochondrion nucleoid</keyword>
<keyword id="KW-1185">Reference proteome</keyword>
<keyword id="KW-0804">Transcription</keyword>
<keyword id="KW-0805">Transcription regulation</keyword>
<keyword id="KW-0809">Transit peptide</keyword>
<reference key="1">
    <citation type="submission" date="2007-07" db="EMBL/GenBank/DDBJ databases">
        <authorList>
            <consortium name="NIH - Mammalian Gene Collection (MGC) project"/>
        </authorList>
    </citation>
    <scope>NUCLEOTIDE SEQUENCE [LARGE SCALE MRNA]</scope>
    <source>
        <strain>Hereford</strain>
        <tissue>Thymus</tissue>
    </source>
</reference>
<sequence length="356" mass="40608">MTVPSLLLAGGRWRCFPLPLASSLFQALHNSCCRKESTAPKKIIPHIDFSDETAKESGKTLDKLFSSEQQASILHVLNTASNKELEAFKLLRGKKSFNIVEHRKKFGPFQNLESLMNVPLFQYKITIQVCNSILNPETGGKKKKLQESRLLRKLIKPEIGRERVKAVNSIVSIVSGTRRIAWAHLDRKLAVLDWQQTEYCQLMKGSYLSSVYLEEISSIISKMPKADFYVLEKAGPSFQNPSLFPVLLHFHMTEAMLYALLNTTFAQDGHHQVLSMNRNAVGKHFELMIGDTRTSGKEVVKQLLSESVLKDEPRVFFPPEKIVRYRQMFSSTEHNRVEELYDSLLQAIAFYELAVF</sequence>
<feature type="transit peptide" description="Mitochondrion" evidence="2">
    <location>
        <begin position="1"/>
        <end position="35"/>
    </location>
</feature>
<feature type="chain" id="PRO_0000406328" description="Transcription elongation factor, mitochondrial">
    <location>
        <begin position="36"/>
        <end position="356"/>
    </location>
</feature>
<name>TEFM_BOVIN</name>
<gene>
    <name type="primary">TEFM</name>
</gene>
<organism>
    <name type="scientific">Bos taurus</name>
    <name type="common">Bovine</name>
    <dbReference type="NCBI Taxonomy" id="9913"/>
    <lineage>
        <taxon>Eukaryota</taxon>
        <taxon>Metazoa</taxon>
        <taxon>Chordata</taxon>
        <taxon>Craniata</taxon>
        <taxon>Vertebrata</taxon>
        <taxon>Euteleostomi</taxon>
        <taxon>Mammalia</taxon>
        <taxon>Eutheria</taxon>
        <taxon>Laurasiatheria</taxon>
        <taxon>Artiodactyla</taxon>
        <taxon>Ruminantia</taxon>
        <taxon>Pecora</taxon>
        <taxon>Bovidae</taxon>
        <taxon>Bovinae</taxon>
        <taxon>Bos</taxon>
    </lineage>
</organism>
<protein>
    <recommendedName>
        <fullName>Transcription elongation factor, mitochondrial</fullName>
    </recommendedName>
</protein>